<organism>
    <name type="scientific">Mus musculus</name>
    <name type="common">Mouse</name>
    <dbReference type="NCBI Taxonomy" id="10090"/>
    <lineage>
        <taxon>Eukaryota</taxon>
        <taxon>Metazoa</taxon>
        <taxon>Chordata</taxon>
        <taxon>Craniata</taxon>
        <taxon>Vertebrata</taxon>
        <taxon>Euteleostomi</taxon>
        <taxon>Mammalia</taxon>
        <taxon>Eutheria</taxon>
        <taxon>Euarchontoglires</taxon>
        <taxon>Glires</taxon>
        <taxon>Rodentia</taxon>
        <taxon>Myomorpha</taxon>
        <taxon>Muroidea</taxon>
        <taxon>Muridae</taxon>
        <taxon>Murinae</taxon>
        <taxon>Mus</taxon>
        <taxon>Mus</taxon>
    </lineage>
</organism>
<name>RBX2_MOUSE</name>
<accession>Q9WTZ1</accession>
<accession>Q3UKF8</accession>
<protein>
    <recommendedName>
        <fullName evidence="10">RING-box protein 2</fullName>
        <shortName evidence="10">Rbx2</shortName>
        <ecNumber evidence="1">2.3.2.27</ecNumber>
        <ecNumber evidence="1">2.3.2.32</ecNumber>
    </recommendedName>
    <alternativeName>
        <fullName>RING finger protein 7</fullName>
    </alternativeName>
    <alternativeName>
        <fullName evidence="9">Sensitive to apoptosis gene protein</fullName>
    </alternativeName>
</protein>
<gene>
    <name evidence="12" type="primary">Rnf7</name>
    <name evidence="10" type="synonym">Rbx2</name>
    <name evidence="9" type="synonym">Sag</name>
</gene>
<keyword id="KW-0002">3D-structure</keyword>
<keyword id="KW-0007">Acetylation</keyword>
<keyword id="KW-0963">Cytoplasm</keyword>
<keyword id="KW-0479">Metal-binding</keyword>
<keyword id="KW-0539">Nucleus</keyword>
<keyword id="KW-1185">Reference proteome</keyword>
<keyword id="KW-0808">Transferase</keyword>
<keyword id="KW-0833">Ubl conjugation pathway</keyword>
<keyword id="KW-0862">Zinc</keyword>
<keyword id="KW-0863">Zinc-finger</keyword>
<evidence type="ECO:0000250" key="1">
    <source>
        <dbReference type="UniProtKB" id="Q9UBF6"/>
    </source>
</evidence>
<evidence type="ECO:0000255" key="2">
    <source>
        <dbReference type="PROSITE-ProRule" id="PRU00175"/>
    </source>
</evidence>
<evidence type="ECO:0000256" key="3">
    <source>
        <dbReference type="SAM" id="MobiDB-lite"/>
    </source>
</evidence>
<evidence type="ECO:0000269" key="4">
    <source>
    </source>
</evidence>
<evidence type="ECO:0000269" key="5">
    <source>
    </source>
</evidence>
<evidence type="ECO:0000269" key="6">
    <source>
    </source>
</evidence>
<evidence type="ECO:0000269" key="7">
    <source>
    </source>
</evidence>
<evidence type="ECO:0000269" key="8">
    <source>
    </source>
</evidence>
<evidence type="ECO:0000303" key="9">
    <source>
    </source>
</evidence>
<evidence type="ECO:0000303" key="10">
    <source>
    </source>
</evidence>
<evidence type="ECO:0000305" key="11"/>
<evidence type="ECO:0000312" key="12">
    <source>
        <dbReference type="MGI" id="MGI:1337096"/>
    </source>
</evidence>
<evidence type="ECO:0007744" key="13">
    <source>
        <dbReference type="PDB" id="6V9I"/>
    </source>
</evidence>
<proteinExistence type="evidence at protein level"/>
<comment type="function">
    <text evidence="1 5 6 7">Catalytic component of multiple cullin-5-RING E3 ubiquitin-protein ligase complexes (ECS complexes), which mediate the ubiquitination and subsequent proteasomal degradation of target proteins (PubMed:22118770, PubMed:24210661, PubMed:29361558). It is thereby involved in various biological processes, such as cell cycle progression, signal transduction and transcription (PubMed:22118770, PubMed:24210661, PubMed:29361558). The functional specificity of the E3 ubiquitin-protein ligase ECS complexes depend on the variable SOCS box-containing substrate recognition component (PubMed:24210661). Within ECS complexes, RNF7/RBX2 recruits the E2 ubiquitination enzyme to the complex via its RING-type and brings it into close proximity to the substrate (By similarity). Catalytic subunit of various SOCS-containing ECS complexes, such as the ECS(SOCS7) complex, that regulate reelin signaling by mediating ubiquitination and degradation of DAB1 (PubMed:24210661, PubMed:29361558). The ECS(SOCS2) complex mediates the ubiquitination and subsequent proteasomal degradation of phosphorylated EPOR and GHR (By similarity). Promotes ubiquitination and degradation of NF1, thereby regulating Ras protein signal transduction (PubMed:22118770). As part of the ECS(ASB9) complex, catalyzes ubiquitination and degradation of CKB (By similarity). The ECS(SPSB3) complex catalyzes ubiquitination of nuclear CGAS (By similarity). As part of the ECS(RAB40C) complex, mediates ANKRD28 ubiquitination and degradation, thereby inhibiting protein phosphatase 6 (PP6) complex activity and focal adhesion assembly during cell migration (By similarity). As part of some ECS complex, catalyzes 'Lys-11'-linked ubiquitination and degradation of BTRC (By similarity). ECS complexes and ARIH2 collaborate in tandem to mediate ubiquitination of target proteins; ARIH2 mediating addition of the first ubiquitin on CRLs targets (By similarity). Specifically catalyzes the neddylation of CUL5 via its interaction with UBE2F (By similarity). Does not catalyze neddylation of other cullins (CUL1, CUL2, CUL3, CUL4A or CUL4B) (By similarity). May play a role in protecting cells from apoptosis induced by redox agents (By similarity).</text>
</comment>
<comment type="catalytic activity">
    <reaction evidence="1">
        <text>S-ubiquitinyl-[E2 ubiquitin-conjugating enzyme]-L-cysteine + [acceptor protein]-L-lysine = [E2 ubiquitin-conjugating enzyme]-L-cysteine + N(6)-ubiquitinyl-[acceptor protein]-L-lysine.</text>
        <dbReference type="EC" id="2.3.2.27"/>
    </reaction>
</comment>
<comment type="catalytic activity">
    <reaction evidence="1">
        <text>S-[NEDD8-protein]-yl-[E2 NEDD8-conjugating enzyme]-L-cysteine + [cullin]-L-lysine = [E2 NEDD8-conjugating enzyme]-L-cysteine + N(6)-[NEDD8-protein]-yl-[cullin]-L-lysine.</text>
        <dbReference type="EC" id="2.3.2.32"/>
    </reaction>
</comment>
<comment type="pathway">
    <text evidence="5 6 7">Protein modification; protein ubiquitination.</text>
</comment>
<comment type="pathway">
    <text evidence="1">Protein modification; protein neddylation.</text>
</comment>
<comment type="subunit">
    <text evidence="1 6 8">Catalytic component of multiple cullin-5-RING E3 ubiquitin-protein ligase complexes (ECS complexes, also named CRL5 complexes) composed of CUL5, Elongin BC (ELOB and ELOC), RNF7/RBX2 and a variable SOCS box domain-containing protein as substrate-specific recognition component (PubMed:24210661, PubMed:32513959). Also interacts (with lower preference) with CUL1, CUL2, CUL3, CUL4A and CUL4B; additional evidence is however required to confirm this result in vivo (By similarity). Interacts with UBE2F (By similarity). Interacts with CSNK2B, the interaction is not affected by phosphorylation by CK2 (By similarity). May also interact with DCUN1D1, DCUN1D2, DCUN1D3, DCUN1D4 and DCUN1D5 (By similarity).</text>
</comment>
<comment type="subcellular location">
    <subcellularLocation>
        <location evidence="1">Cytoplasm</location>
    </subcellularLocation>
    <subcellularLocation>
        <location evidence="1">Nucleus</location>
    </subcellularLocation>
</comment>
<comment type="domain">
    <text evidence="1">The RING-type zinc finger domain is essential for ubiquitin ligase activity. It coordinates an additional third zinc ion.</text>
</comment>
<comment type="disruption phenotype">
    <text evidence="4 5">Embryonic lethality at 11.5-12.5 days post-coitum (dpc) due to severa defects in vascular and nervous system (PubMed:22118770). Embryos display impaired endothelial differentiation of embryonic stem cells and angiogenesis (PubMed:22110742, PubMed:22118770).</text>
</comment>
<comment type="similarity">
    <text evidence="11">Belongs to the RING-box family.</text>
</comment>
<reference key="1">
    <citation type="journal article" date="1999" name="Mol. Cell. Biol.">
        <title>SAG, a novel zinc RING finger protein that protects cells from apoptosis induced by redox agents.</title>
        <authorList>
            <person name="Duan H."/>
            <person name="Wang Y."/>
            <person name="Aviram M."/>
            <person name="Swaroop M."/>
            <person name="Loo J.A."/>
            <person name="Bian J."/>
            <person name="Tian Y."/>
            <person name="Mueller T."/>
            <person name="Bisgaier C.L."/>
            <person name="Sun Y."/>
        </authorList>
    </citation>
    <scope>NUCLEOTIDE SEQUENCE [MRNA]</scope>
    <source>
        <strain>C57BL/6 X CBA</strain>
        <tissue>Lung</tissue>
    </source>
</reference>
<reference key="2">
    <citation type="journal article" date="2005" name="Science">
        <title>The transcriptional landscape of the mammalian genome.</title>
        <authorList>
            <person name="Carninci P."/>
            <person name="Kasukawa T."/>
            <person name="Katayama S."/>
            <person name="Gough J."/>
            <person name="Frith M.C."/>
            <person name="Maeda N."/>
            <person name="Oyama R."/>
            <person name="Ravasi T."/>
            <person name="Lenhard B."/>
            <person name="Wells C."/>
            <person name="Kodzius R."/>
            <person name="Shimokawa K."/>
            <person name="Bajic V.B."/>
            <person name="Brenner S.E."/>
            <person name="Batalov S."/>
            <person name="Forrest A.R."/>
            <person name="Zavolan M."/>
            <person name="Davis M.J."/>
            <person name="Wilming L.G."/>
            <person name="Aidinis V."/>
            <person name="Allen J.E."/>
            <person name="Ambesi-Impiombato A."/>
            <person name="Apweiler R."/>
            <person name="Aturaliya R.N."/>
            <person name="Bailey T.L."/>
            <person name="Bansal M."/>
            <person name="Baxter L."/>
            <person name="Beisel K.W."/>
            <person name="Bersano T."/>
            <person name="Bono H."/>
            <person name="Chalk A.M."/>
            <person name="Chiu K.P."/>
            <person name="Choudhary V."/>
            <person name="Christoffels A."/>
            <person name="Clutterbuck D.R."/>
            <person name="Crowe M.L."/>
            <person name="Dalla E."/>
            <person name="Dalrymple B.P."/>
            <person name="de Bono B."/>
            <person name="Della Gatta G."/>
            <person name="di Bernardo D."/>
            <person name="Down T."/>
            <person name="Engstrom P."/>
            <person name="Fagiolini M."/>
            <person name="Faulkner G."/>
            <person name="Fletcher C.F."/>
            <person name="Fukushima T."/>
            <person name="Furuno M."/>
            <person name="Futaki S."/>
            <person name="Gariboldi M."/>
            <person name="Georgii-Hemming P."/>
            <person name="Gingeras T.R."/>
            <person name="Gojobori T."/>
            <person name="Green R.E."/>
            <person name="Gustincich S."/>
            <person name="Harbers M."/>
            <person name="Hayashi Y."/>
            <person name="Hensch T.K."/>
            <person name="Hirokawa N."/>
            <person name="Hill D."/>
            <person name="Huminiecki L."/>
            <person name="Iacono M."/>
            <person name="Ikeo K."/>
            <person name="Iwama A."/>
            <person name="Ishikawa T."/>
            <person name="Jakt M."/>
            <person name="Kanapin A."/>
            <person name="Katoh M."/>
            <person name="Kawasawa Y."/>
            <person name="Kelso J."/>
            <person name="Kitamura H."/>
            <person name="Kitano H."/>
            <person name="Kollias G."/>
            <person name="Krishnan S.P."/>
            <person name="Kruger A."/>
            <person name="Kummerfeld S.K."/>
            <person name="Kurochkin I.V."/>
            <person name="Lareau L.F."/>
            <person name="Lazarevic D."/>
            <person name="Lipovich L."/>
            <person name="Liu J."/>
            <person name="Liuni S."/>
            <person name="McWilliam S."/>
            <person name="Madan Babu M."/>
            <person name="Madera M."/>
            <person name="Marchionni L."/>
            <person name="Matsuda H."/>
            <person name="Matsuzawa S."/>
            <person name="Miki H."/>
            <person name="Mignone F."/>
            <person name="Miyake S."/>
            <person name="Morris K."/>
            <person name="Mottagui-Tabar S."/>
            <person name="Mulder N."/>
            <person name="Nakano N."/>
            <person name="Nakauchi H."/>
            <person name="Ng P."/>
            <person name="Nilsson R."/>
            <person name="Nishiguchi S."/>
            <person name="Nishikawa S."/>
            <person name="Nori F."/>
            <person name="Ohara O."/>
            <person name="Okazaki Y."/>
            <person name="Orlando V."/>
            <person name="Pang K.C."/>
            <person name="Pavan W.J."/>
            <person name="Pavesi G."/>
            <person name="Pesole G."/>
            <person name="Petrovsky N."/>
            <person name="Piazza S."/>
            <person name="Reed J."/>
            <person name="Reid J.F."/>
            <person name="Ring B.Z."/>
            <person name="Ringwald M."/>
            <person name="Rost B."/>
            <person name="Ruan Y."/>
            <person name="Salzberg S.L."/>
            <person name="Sandelin A."/>
            <person name="Schneider C."/>
            <person name="Schoenbach C."/>
            <person name="Sekiguchi K."/>
            <person name="Semple C.A."/>
            <person name="Seno S."/>
            <person name="Sessa L."/>
            <person name="Sheng Y."/>
            <person name="Shibata Y."/>
            <person name="Shimada H."/>
            <person name="Shimada K."/>
            <person name="Silva D."/>
            <person name="Sinclair B."/>
            <person name="Sperling S."/>
            <person name="Stupka E."/>
            <person name="Sugiura K."/>
            <person name="Sultana R."/>
            <person name="Takenaka Y."/>
            <person name="Taki K."/>
            <person name="Tammoja K."/>
            <person name="Tan S.L."/>
            <person name="Tang S."/>
            <person name="Taylor M.S."/>
            <person name="Tegner J."/>
            <person name="Teichmann S.A."/>
            <person name="Ueda H.R."/>
            <person name="van Nimwegen E."/>
            <person name="Verardo R."/>
            <person name="Wei C.L."/>
            <person name="Yagi K."/>
            <person name="Yamanishi H."/>
            <person name="Zabarovsky E."/>
            <person name="Zhu S."/>
            <person name="Zimmer A."/>
            <person name="Hide W."/>
            <person name="Bult C."/>
            <person name="Grimmond S.M."/>
            <person name="Teasdale R.D."/>
            <person name="Liu E.T."/>
            <person name="Brusic V."/>
            <person name="Quackenbush J."/>
            <person name="Wahlestedt C."/>
            <person name="Mattick J.S."/>
            <person name="Hume D.A."/>
            <person name="Kai C."/>
            <person name="Sasaki D."/>
            <person name="Tomaru Y."/>
            <person name="Fukuda S."/>
            <person name="Kanamori-Katayama M."/>
            <person name="Suzuki M."/>
            <person name="Aoki J."/>
            <person name="Arakawa T."/>
            <person name="Iida J."/>
            <person name="Imamura K."/>
            <person name="Itoh M."/>
            <person name="Kato T."/>
            <person name="Kawaji H."/>
            <person name="Kawagashira N."/>
            <person name="Kawashima T."/>
            <person name="Kojima M."/>
            <person name="Kondo S."/>
            <person name="Konno H."/>
            <person name="Nakano K."/>
            <person name="Ninomiya N."/>
            <person name="Nishio T."/>
            <person name="Okada M."/>
            <person name="Plessy C."/>
            <person name="Shibata K."/>
            <person name="Shiraki T."/>
            <person name="Suzuki S."/>
            <person name="Tagami M."/>
            <person name="Waki K."/>
            <person name="Watahiki A."/>
            <person name="Okamura-Oho Y."/>
            <person name="Suzuki H."/>
            <person name="Kawai J."/>
            <person name="Hayashizaki Y."/>
        </authorList>
    </citation>
    <scope>NUCLEOTIDE SEQUENCE [LARGE SCALE MRNA]</scope>
    <source>
        <strain>C57BL/6J</strain>
        <tissue>Embryo</tissue>
        <tissue>Placenta</tissue>
    </source>
</reference>
<reference key="3">
    <citation type="journal article" date="2004" name="Genome Res.">
        <title>The status, quality, and expansion of the NIH full-length cDNA project: the Mammalian Gene Collection (MGC).</title>
        <authorList>
            <consortium name="The MGC Project Team"/>
        </authorList>
    </citation>
    <scope>NUCLEOTIDE SEQUENCE [LARGE SCALE MRNA]</scope>
    <source>
        <tissue>Liver</tissue>
    </source>
</reference>
<reference key="4">
    <citation type="journal article" date="2011" name="Dev. Cell">
        <title>SAG/RBX2/ROC2 E3 ubiquitin ligase is essential for vascular and neural development by targeting NF1 for degradation.</title>
        <authorList>
            <person name="Tan M."/>
            <person name="Zhao Y."/>
            <person name="Kim S.J."/>
            <person name="Liu M."/>
            <person name="Jia L."/>
            <person name="Saunders T.L."/>
            <person name="Zhu Y."/>
            <person name="Sun Y."/>
        </authorList>
    </citation>
    <scope>FUNCTION</scope>
    <scope>PATHWAY</scope>
    <scope>DISRUPTION PHENOTYPE</scope>
</reference>
<reference key="5">
    <citation type="journal article" date="2011" name="PLoS ONE">
        <title>Inactivation of SAG E3 ubiquitin ligase blocks embryonic stem cell differentiation and sensitizes leukemia cells to retinoid acid.</title>
        <authorList>
            <person name="Tan M."/>
            <person name="Li Y."/>
            <person name="Yang R."/>
            <person name="Xi N."/>
            <person name="Sun Y."/>
        </authorList>
    </citation>
    <scope>DISRUPTION PHENOTYPE</scope>
</reference>
<reference key="6">
    <citation type="journal article" date="2013" name="Dev. Cell">
        <title>Rbx2 regulates neuronal migration through different cullin 5-RING ligase adaptors.</title>
        <authorList>
            <person name="Simo S."/>
            <person name="Cooper J.A."/>
        </authorList>
    </citation>
    <scope>FUNCTION</scope>
    <scope>PATHWAY</scope>
</reference>
<reference key="7">
    <citation type="journal article" date="2018" name="Development">
        <title>RBX2 maintains final retinal cell position in a DAB1-dependent and -independent fashion.</title>
        <authorList>
            <person name="Fairchild C.L."/>
            <person name="Hino K."/>
            <person name="Han J.S."/>
            <person name="Miltner A.M."/>
            <person name="Peinado Allina G."/>
            <person name="Brown C.E."/>
            <person name="Burns M.E."/>
            <person name="La Torre A."/>
            <person name="Simo S."/>
        </authorList>
    </citation>
    <scope>FUNCTION</scope>
    <scope>PATHWAY</scope>
</reference>
<reference evidence="13" key="8">
    <citation type="journal article" date="2020" name="Nat. Commun.">
        <title>Structure and dynamics of the ASB9 CUL-RING E3 ligase.</title>
        <authorList>
            <person name="Lumpkin R.J."/>
            <person name="Baker R.W."/>
            <person name="Leschziner A.E."/>
            <person name="Komives E.A."/>
        </authorList>
    </citation>
    <scope>STRUCTURE BY ELECTRON MICROSCOPY (5.20 ANGSTROMS) IN COMPLEX WITH CUL5</scope>
    <scope>INTERACTION WITH CUL5</scope>
</reference>
<sequence length="113" mass="12707">MADVEDGEEPCVLSSHSGSAGSKSGGDKMFSLKKWNAVAMWSWDVECDTCAICRVQVMDACLRCQAENKQEDCVVVWGECNHSFHNCCMSLWVKQNNRCPLCQQDWVVQRIGK</sequence>
<feature type="initiator methionine" description="Removed" evidence="1">
    <location>
        <position position="1"/>
    </location>
</feature>
<feature type="chain" id="PRO_0000056024" description="RING-box protein 2">
    <location>
        <begin position="2"/>
        <end position="113"/>
    </location>
</feature>
<feature type="zinc finger region" description="RING-type" evidence="2">
    <location>
        <begin position="61"/>
        <end position="103"/>
    </location>
</feature>
<feature type="region of interest" description="Disordered" evidence="3">
    <location>
        <begin position="1"/>
        <end position="26"/>
    </location>
</feature>
<feature type="binding site" evidence="8 13">
    <location>
        <position position="50"/>
    </location>
    <ligand>
        <name>Zn(2+)</name>
        <dbReference type="ChEBI" id="CHEBI:29105"/>
        <label>1</label>
    </ligand>
</feature>
<feature type="binding site" evidence="8 13">
    <location>
        <position position="53"/>
    </location>
    <ligand>
        <name>Zn(2+)</name>
        <dbReference type="ChEBI" id="CHEBI:29105"/>
        <label>1</label>
    </ligand>
</feature>
<feature type="binding site" evidence="8 13">
    <location>
        <position position="61"/>
    </location>
    <ligand>
        <name>Zn(2+)</name>
        <dbReference type="ChEBI" id="CHEBI:29105"/>
        <label>3</label>
    </ligand>
</feature>
<feature type="binding site" evidence="8 13">
    <location>
        <position position="64"/>
    </location>
    <ligand>
        <name>Zn(2+)</name>
        <dbReference type="ChEBI" id="CHEBI:29105"/>
        <label>3</label>
    </ligand>
</feature>
<feature type="binding site" evidence="8 13">
    <location>
        <position position="73"/>
    </location>
    <ligand>
        <name>Zn(2+)</name>
        <dbReference type="ChEBI" id="CHEBI:29105"/>
        <label>3</label>
    </ligand>
</feature>
<feature type="binding site" evidence="8 13">
    <location>
        <position position="80"/>
    </location>
    <ligand>
        <name>Zn(2+)</name>
        <dbReference type="ChEBI" id="CHEBI:29105"/>
        <label>2</label>
    </ligand>
</feature>
<feature type="binding site" evidence="8 13">
    <location>
        <position position="82"/>
    </location>
    <ligand>
        <name>Zn(2+)</name>
        <dbReference type="ChEBI" id="CHEBI:29105"/>
        <label>2</label>
    </ligand>
</feature>
<feature type="binding site" evidence="8 13">
    <location>
        <position position="85"/>
    </location>
    <ligand>
        <name>Zn(2+)</name>
        <dbReference type="ChEBI" id="CHEBI:29105"/>
        <label>1</label>
    </ligand>
</feature>
<feature type="binding site" evidence="8 13">
    <location>
        <position position="87"/>
    </location>
    <ligand>
        <name>Zn(2+)</name>
        <dbReference type="ChEBI" id="CHEBI:29105"/>
        <label>3</label>
    </ligand>
</feature>
<feature type="binding site" evidence="8 13">
    <location>
        <position position="88"/>
    </location>
    <ligand>
        <name>Zn(2+)</name>
        <dbReference type="ChEBI" id="CHEBI:29105"/>
        <label>1</label>
    </ligand>
</feature>
<feature type="binding site" evidence="8 13">
    <location>
        <position position="99"/>
    </location>
    <ligand>
        <name>Zn(2+)</name>
        <dbReference type="ChEBI" id="CHEBI:29105"/>
        <label>2</label>
    </ligand>
</feature>
<feature type="binding site" evidence="8 13">
    <location>
        <position position="102"/>
    </location>
    <ligand>
        <name>Zn(2+)</name>
        <dbReference type="ChEBI" id="CHEBI:29105"/>
        <label>2</label>
    </ligand>
</feature>
<feature type="modified residue" description="N-acetylalanine" evidence="1">
    <location>
        <position position="2"/>
    </location>
</feature>
<dbReference type="EC" id="2.3.2.27" evidence="1"/>
<dbReference type="EC" id="2.3.2.32" evidence="1"/>
<dbReference type="EMBL" id="AF092877">
    <property type="protein sequence ID" value="AAD25961.1"/>
    <property type="molecule type" value="mRNA"/>
</dbReference>
<dbReference type="EMBL" id="AK003248">
    <property type="protein sequence ID" value="BAB22666.1"/>
    <property type="molecule type" value="mRNA"/>
</dbReference>
<dbReference type="EMBL" id="AK146030">
    <property type="protein sequence ID" value="BAE26843.1"/>
    <property type="molecule type" value="mRNA"/>
</dbReference>
<dbReference type="EMBL" id="BC011127">
    <property type="protein sequence ID" value="AAH11127.1"/>
    <property type="molecule type" value="mRNA"/>
</dbReference>
<dbReference type="CCDS" id="CCDS40730.1"/>
<dbReference type="RefSeq" id="NP_001298064.1">
    <property type="nucleotide sequence ID" value="NM_001311135.1"/>
</dbReference>
<dbReference type="RefSeq" id="NP_035409.1">
    <property type="nucleotide sequence ID" value="NM_011279.3"/>
</dbReference>
<dbReference type="PDB" id="6V9I">
    <property type="method" value="EM"/>
    <property type="resolution" value="5.20 A"/>
    <property type="chains" value="R=1-113"/>
</dbReference>
<dbReference type="PDBsum" id="6V9I"/>
<dbReference type="BMRB" id="Q9WTZ1"/>
<dbReference type="EMDB" id="EMD-21121"/>
<dbReference type="SMR" id="Q9WTZ1"/>
<dbReference type="BioGRID" id="202921">
    <property type="interactions" value="23"/>
</dbReference>
<dbReference type="FunCoup" id="Q9WTZ1">
    <property type="interactions" value="3147"/>
</dbReference>
<dbReference type="IntAct" id="Q9WTZ1">
    <property type="interactions" value="7"/>
</dbReference>
<dbReference type="MINT" id="Q9WTZ1"/>
<dbReference type="STRING" id="10090.ENSMUSP00000052856"/>
<dbReference type="iPTMnet" id="Q9WTZ1"/>
<dbReference type="PhosphoSitePlus" id="Q9WTZ1"/>
<dbReference type="SwissPalm" id="Q9WTZ1"/>
<dbReference type="jPOST" id="Q9WTZ1"/>
<dbReference type="PaxDb" id="10090-ENSMUSP00000052856"/>
<dbReference type="PeptideAtlas" id="Q9WTZ1"/>
<dbReference type="ProteomicsDB" id="255163"/>
<dbReference type="Pumba" id="Q9WTZ1"/>
<dbReference type="DNASU" id="19823"/>
<dbReference type="Ensembl" id="ENSMUST00000057500.6">
    <property type="protein sequence ID" value="ENSMUSP00000052856.5"/>
    <property type="gene ID" value="ENSMUSG00000051234.7"/>
</dbReference>
<dbReference type="GeneID" id="19823"/>
<dbReference type="KEGG" id="mmu:19823"/>
<dbReference type="UCSC" id="uc009rcm.1">
    <property type="organism name" value="mouse"/>
</dbReference>
<dbReference type="AGR" id="MGI:1337096"/>
<dbReference type="CTD" id="9616"/>
<dbReference type="MGI" id="MGI:1337096">
    <property type="gene designation" value="Rnf7"/>
</dbReference>
<dbReference type="VEuPathDB" id="HostDB:ENSMUSG00000051234"/>
<dbReference type="eggNOG" id="KOG2930">
    <property type="taxonomic scope" value="Eukaryota"/>
</dbReference>
<dbReference type="GeneTree" id="ENSGT00940000155481"/>
<dbReference type="HOGENOM" id="CLU_115512_2_2_1"/>
<dbReference type="InParanoid" id="Q9WTZ1"/>
<dbReference type="OMA" id="RQNNRCP"/>
<dbReference type="OrthoDB" id="8962942at2759"/>
<dbReference type="PhylomeDB" id="Q9WTZ1"/>
<dbReference type="TreeFam" id="TF351049"/>
<dbReference type="Reactome" id="R-MMU-8951664">
    <property type="pathway name" value="Neddylation"/>
</dbReference>
<dbReference type="Reactome" id="R-MMU-9705462">
    <property type="pathway name" value="Inactivation of CSF3 (G-CSF) signaling"/>
</dbReference>
<dbReference type="Reactome" id="R-MMU-983168">
    <property type="pathway name" value="Antigen processing: Ubiquitination &amp; Proteasome degradation"/>
</dbReference>
<dbReference type="UniPathway" id="UPA00143"/>
<dbReference type="UniPathway" id="UPA00885"/>
<dbReference type="BioGRID-ORCS" id="19823">
    <property type="hits" value="8 hits in 78 CRISPR screens"/>
</dbReference>
<dbReference type="ChiTaRS" id="Rnf7">
    <property type="organism name" value="mouse"/>
</dbReference>
<dbReference type="PRO" id="PR:Q9WTZ1"/>
<dbReference type="Proteomes" id="UP000000589">
    <property type="component" value="Chromosome 9"/>
</dbReference>
<dbReference type="RNAct" id="Q9WTZ1">
    <property type="molecule type" value="protein"/>
</dbReference>
<dbReference type="Bgee" id="ENSMUSG00000051234">
    <property type="expression patterns" value="Expressed in choroid plexus epithelium and 266 other cell types or tissues"/>
</dbReference>
<dbReference type="ExpressionAtlas" id="Q9WTZ1">
    <property type="expression patterns" value="baseline and differential"/>
</dbReference>
<dbReference type="GO" id="GO:0031466">
    <property type="term" value="C:Cul5-RING ubiquitin ligase complex"/>
    <property type="evidence" value="ECO:0000314"/>
    <property type="project" value="UniProtKB"/>
</dbReference>
<dbReference type="GO" id="GO:0005737">
    <property type="term" value="C:cytoplasm"/>
    <property type="evidence" value="ECO:0000314"/>
    <property type="project" value="MGI"/>
</dbReference>
<dbReference type="GO" id="GO:0005829">
    <property type="term" value="C:cytosol"/>
    <property type="evidence" value="ECO:0000304"/>
    <property type="project" value="Reactome"/>
</dbReference>
<dbReference type="GO" id="GO:0005634">
    <property type="term" value="C:nucleus"/>
    <property type="evidence" value="ECO:0000314"/>
    <property type="project" value="MGI"/>
</dbReference>
<dbReference type="GO" id="GO:0097602">
    <property type="term" value="F:cullin family protein binding"/>
    <property type="evidence" value="ECO:0000266"/>
    <property type="project" value="MGI"/>
</dbReference>
<dbReference type="GO" id="GO:0061663">
    <property type="term" value="F:NEDD8 ligase activity"/>
    <property type="evidence" value="ECO:0000250"/>
    <property type="project" value="UniProtKB"/>
</dbReference>
<dbReference type="GO" id="GO:0061630">
    <property type="term" value="F:ubiquitin protein ligase activity"/>
    <property type="evidence" value="ECO:0000315"/>
    <property type="project" value="UniProtKB"/>
</dbReference>
<dbReference type="GO" id="GO:0008270">
    <property type="term" value="F:zinc ion binding"/>
    <property type="evidence" value="ECO:0007669"/>
    <property type="project" value="UniProtKB-KW"/>
</dbReference>
<dbReference type="GO" id="GO:0008637">
    <property type="term" value="P:apoptotic mitochondrial changes"/>
    <property type="evidence" value="ECO:0000314"/>
    <property type="project" value="MGI"/>
</dbReference>
<dbReference type="GO" id="GO:0021799">
    <property type="term" value="P:cerebral cortex radially oriented cell migration"/>
    <property type="evidence" value="ECO:0000315"/>
    <property type="project" value="MGI"/>
</dbReference>
<dbReference type="GO" id="GO:0008631">
    <property type="term" value="P:intrinsic apoptotic signaling pathway in response to oxidative stress"/>
    <property type="evidence" value="ECO:0000314"/>
    <property type="project" value="MGI"/>
</dbReference>
<dbReference type="GO" id="GO:0043066">
    <property type="term" value="P:negative regulation of apoptotic process"/>
    <property type="evidence" value="ECO:0000314"/>
    <property type="project" value="MGI"/>
</dbReference>
<dbReference type="GO" id="GO:0043161">
    <property type="term" value="P:proteasome-mediated ubiquitin-dependent protein catabolic process"/>
    <property type="evidence" value="ECO:0000314"/>
    <property type="project" value="UniProtKB"/>
</dbReference>
<dbReference type="GO" id="GO:0045116">
    <property type="term" value="P:protein neddylation"/>
    <property type="evidence" value="ECO:0000250"/>
    <property type="project" value="UniProtKB"/>
</dbReference>
<dbReference type="GO" id="GO:0016567">
    <property type="term" value="P:protein ubiquitination"/>
    <property type="evidence" value="ECO:0007669"/>
    <property type="project" value="UniProtKB-UniPathway"/>
</dbReference>
<dbReference type="GO" id="GO:0021942">
    <property type="term" value="P:radial glia guided migration of Purkinje cell"/>
    <property type="evidence" value="ECO:0000315"/>
    <property type="project" value="MGI"/>
</dbReference>
<dbReference type="GO" id="GO:0038026">
    <property type="term" value="P:reelin-mediated signaling pathway"/>
    <property type="evidence" value="ECO:0000315"/>
    <property type="project" value="UniProtKB"/>
</dbReference>
<dbReference type="GO" id="GO:2001222">
    <property type="term" value="P:regulation of neuron migration"/>
    <property type="evidence" value="ECO:0000315"/>
    <property type="project" value="UniProtKB"/>
</dbReference>
<dbReference type="CDD" id="cd16466">
    <property type="entry name" value="RING-H2_RBX2"/>
    <property type="match status" value="1"/>
</dbReference>
<dbReference type="FunFam" id="3.30.40.10:FF:000156">
    <property type="entry name" value="RING-box protein 2 isoform X1"/>
    <property type="match status" value="1"/>
</dbReference>
<dbReference type="Gene3D" id="3.30.40.10">
    <property type="entry name" value="Zinc/RING finger domain, C3HC4 (zinc finger)"/>
    <property type="match status" value="1"/>
</dbReference>
<dbReference type="InterPro" id="IPR051031">
    <property type="entry name" value="RING-box_E3_Ubiquitin_Ligase"/>
</dbReference>
<dbReference type="InterPro" id="IPR001841">
    <property type="entry name" value="Znf_RING"/>
</dbReference>
<dbReference type="InterPro" id="IPR013083">
    <property type="entry name" value="Znf_RING/FYVE/PHD"/>
</dbReference>
<dbReference type="InterPro" id="IPR024766">
    <property type="entry name" value="Znf_RING_H2"/>
</dbReference>
<dbReference type="PANTHER" id="PTHR11210">
    <property type="entry name" value="RING BOX"/>
    <property type="match status" value="1"/>
</dbReference>
<dbReference type="Pfam" id="PF12678">
    <property type="entry name" value="zf-rbx1"/>
    <property type="match status" value="1"/>
</dbReference>
<dbReference type="SUPFAM" id="SSF57850">
    <property type="entry name" value="RING/U-box"/>
    <property type="match status" value="1"/>
</dbReference>
<dbReference type="PROSITE" id="PS50089">
    <property type="entry name" value="ZF_RING_2"/>
    <property type="match status" value="1"/>
</dbReference>